<proteinExistence type="inferred from homology"/>
<protein>
    <recommendedName>
        <fullName evidence="1">1D-myo-inositol 2-acetamido-2-deoxy-alpha-D-glucopyranoside deacetylase</fullName>
        <shortName evidence="1">GlcNAc-Ins deacetylase</shortName>
        <ecNumber evidence="1">3.5.1.103</ecNumber>
    </recommendedName>
    <alternativeName>
        <fullName>N-acetyl-1-D-myo-inositol 2-amino-2-deoxy-alpha-D-glucopyranoside deacetylase</fullName>
    </alternativeName>
</protein>
<accession>A5WLJ9</accession>
<gene>
    <name evidence="1" type="primary">mshB</name>
    <name type="ordered locus">TBFG_11195</name>
</gene>
<comment type="function">
    <text evidence="1">Catalyzes the deacetylation of 1D-myo-inositol 2-acetamido-2-deoxy-alpha-D-glucopyranoside (GlcNAc-Ins) in the mycothiol biosynthesis pathway.</text>
</comment>
<comment type="catalytic activity">
    <reaction evidence="1">
        <text>1D-myo-inositol 2-acetamido-2-deoxy-alpha-D-glucopyranoside + H2O = 1D-myo-inositol 2-amino-2-deoxy-alpha-D-glucopyranoside + acetate</text>
        <dbReference type="Rhea" id="RHEA:26180"/>
        <dbReference type="ChEBI" id="CHEBI:15377"/>
        <dbReference type="ChEBI" id="CHEBI:30089"/>
        <dbReference type="ChEBI" id="CHEBI:52442"/>
        <dbReference type="ChEBI" id="CHEBI:58886"/>
        <dbReference type="EC" id="3.5.1.103"/>
    </reaction>
</comment>
<comment type="cofactor">
    <cofactor evidence="1">
        <name>Zn(2+)</name>
        <dbReference type="ChEBI" id="CHEBI:29105"/>
    </cofactor>
    <text evidence="1">Binds 1 zinc ion per subunit.</text>
</comment>
<comment type="similarity">
    <text evidence="1">Belongs to the MshB deacetylase family.</text>
</comment>
<name>MSHB_MYCTF</name>
<feature type="chain" id="PRO_0000400206" description="1D-myo-inositol 2-acetamido-2-deoxy-alpha-D-glucopyranoside deacetylase">
    <location>
        <begin position="1"/>
        <end position="303"/>
    </location>
</feature>
<feature type="binding site" evidence="1">
    <location>
        <position position="13"/>
    </location>
    <ligand>
        <name>Zn(2+)</name>
        <dbReference type="ChEBI" id="CHEBI:29105"/>
    </ligand>
</feature>
<feature type="binding site" evidence="1">
    <location>
        <position position="16"/>
    </location>
    <ligand>
        <name>Zn(2+)</name>
        <dbReference type="ChEBI" id="CHEBI:29105"/>
    </ligand>
</feature>
<feature type="binding site" evidence="1">
    <location>
        <position position="147"/>
    </location>
    <ligand>
        <name>Zn(2+)</name>
        <dbReference type="ChEBI" id="CHEBI:29105"/>
    </ligand>
</feature>
<dbReference type="EC" id="3.5.1.103" evidence="1"/>
<dbReference type="EMBL" id="CP000717">
    <property type="protein sequence ID" value="ABR05538.1"/>
    <property type="molecule type" value="Genomic_DNA"/>
</dbReference>
<dbReference type="RefSeq" id="WP_003406154.1">
    <property type="nucleotide sequence ID" value="NZ_KK339377.1"/>
</dbReference>
<dbReference type="SMR" id="A5WLJ9"/>
<dbReference type="GeneID" id="45425142"/>
<dbReference type="KEGG" id="mtf:TBFG_11195"/>
<dbReference type="PATRIC" id="fig|336982.11.peg.1317"/>
<dbReference type="HOGENOM" id="CLU_049311_2_1_11"/>
<dbReference type="GO" id="GO:0035595">
    <property type="term" value="F:N-acetylglucosaminylinositol deacetylase activity"/>
    <property type="evidence" value="ECO:0007669"/>
    <property type="project" value="UniProtKB-EC"/>
</dbReference>
<dbReference type="GO" id="GO:0008270">
    <property type="term" value="F:zinc ion binding"/>
    <property type="evidence" value="ECO:0007669"/>
    <property type="project" value="UniProtKB-UniRule"/>
</dbReference>
<dbReference type="GO" id="GO:0010125">
    <property type="term" value="P:mycothiol biosynthetic process"/>
    <property type="evidence" value="ECO:0007669"/>
    <property type="project" value="UniProtKB-UniRule"/>
</dbReference>
<dbReference type="Gene3D" id="3.40.50.10320">
    <property type="entry name" value="LmbE-like"/>
    <property type="match status" value="1"/>
</dbReference>
<dbReference type="HAMAP" id="MF_01696">
    <property type="entry name" value="MshB"/>
    <property type="match status" value="1"/>
</dbReference>
<dbReference type="InterPro" id="IPR003737">
    <property type="entry name" value="GlcNAc_PI_deacetylase-related"/>
</dbReference>
<dbReference type="InterPro" id="IPR024078">
    <property type="entry name" value="LmbE-like_dom_sf"/>
</dbReference>
<dbReference type="InterPro" id="IPR017810">
    <property type="entry name" value="Mycothiol_biosynthesis_MshB"/>
</dbReference>
<dbReference type="NCBIfam" id="TIGR03445">
    <property type="entry name" value="mycothiol_MshB"/>
    <property type="match status" value="1"/>
</dbReference>
<dbReference type="PANTHER" id="PTHR12993:SF26">
    <property type="entry name" value="1D-MYO-INOSITOL 2-ACETAMIDO-2-DEOXY-ALPHA-D-GLUCOPYRANOSIDE DEACETYLASE"/>
    <property type="match status" value="1"/>
</dbReference>
<dbReference type="PANTHER" id="PTHR12993">
    <property type="entry name" value="N-ACETYLGLUCOSAMINYL-PHOSPHATIDYLINOSITOL DE-N-ACETYLASE-RELATED"/>
    <property type="match status" value="1"/>
</dbReference>
<dbReference type="Pfam" id="PF02585">
    <property type="entry name" value="PIG-L"/>
    <property type="match status" value="1"/>
</dbReference>
<dbReference type="SUPFAM" id="SSF102588">
    <property type="entry name" value="LmbE-like"/>
    <property type="match status" value="1"/>
</dbReference>
<organism>
    <name type="scientific">Mycobacterium tuberculosis (strain F11)</name>
    <dbReference type="NCBI Taxonomy" id="336982"/>
    <lineage>
        <taxon>Bacteria</taxon>
        <taxon>Bacillati</taxon>
        <taxon>Actinomycetota</taxon>
        <taxon>Actinomycetes</taxon>
        <taxon>Mycobacteriales</taxon>
        <taxon>Mycobacteriaceae</taxon>
        <taxon>Mycobacterium</taxon>
        <taxon>Mycobacterium tuberculosis complex</taxon>
    </lineage>
</organism>
<sequence length="303" mass="31742">MSETPRLLFVHAHPDDESLSNGATIAHYTSRGAQVHVVTCTLGEEGEVIGDRWAQLTADHADQLGGYRIGELTAALRALGVSAPIYLGGAGRWRDSGMAGTDQRSQRRFVDADPRQTVGALVAIIRELRPHVVVTYDPNGGYGHPDHVHTHTVTTAAVAAAGVGSGTADHPGDPWTVPKFYWTVLGLSALISGARALVPDDLRPEWVLPRADEIAFGYSDDGIDAVVEADEQARAAKVAALAAHATQVVVGPTGRAAALSNNLALPILADEHYVLAGGSAGARDERGWETDLLAGLGFTASGT</sequence>
<evidence type="ECO:0000255" key="1">
    <source>
        <dbReference type="HAMAP-Rule" id="MF_01696"/>
    </source>
</evidence>
<keyword id="KW-0378">Hydrolase</keyword>
<keyword id="KW-0479">Metal-binding</keyword>
<keyword id="KW-0862">Zinc</keyword>
<reference key="1">
    <citation type="submission" date="2007-04" db="EMBL/GenBank/DDBJ databases">
        <title>The complete genome sequence of Mycobacterium tuberculosis F11.</title>
        <authorList>
            <person name="Birren B."/>
            <person name="Lander E."/>
            <person name="Galagan J."/>
            <person name="Devon K."/>
            <person name="Nusbaum C."/>
            <person name="Borowsky M.L."/>
            <person name="Grabherr M."/>
            <person name="Mauceli E."/>
            <person name="Brockman W."/>
            <person name="Young S."/>
            <person name="LaButti K."/>
            <person name="Pushparaj V."/>
            <person name="Sykes S."/>
            <person name="Baldwin J."/>
            <person name="Fitzgerald M."/>
            <person name="Bloom T."/>
            <person name="Zimmer A."/>
            <person name="Settipalli S."/>
            <person name="Shea T."/>
            <person name="Arachchi H."/>
            <person name="Macdonald P."/>
            <person name="Abouelleil A."/>
            <person name="Lui A."/>
            <person name="Priest M."/>
            <person name="Berlin A."/>
            <person name="Gearin G."/>
            <person name="Brown A."/>
            <person name="Aftuck L."/>
            <person name="Bessette D."/>
            <person name="Allen N."/>
            <person name="Lubonja R."/>
            <person name="Lokyitsang T."/>
            <person name="Matthews C."/>
            <person name="Dunbar C."/>
            <person name="Benamara M."/>
            <person name="Nguyen T."/>
            <person name="Negash T."/>
            <person name="DeCaprio D."/>
            <person name="Crawford M."/>
            <person name="Koehrsen M."/>
            <person name="Engels R."/>
            <person name="Montgomery P."/>
            <person name="Pearson M."/>
            <person name="Howarth C."/>
            <person name="Kodira C."/>
            <person name="Zeng Q."/>
            <person name="Yandava C."/>
            <person name="O'Leary S."/>
            <person name="Alvarado L."/>
            <person name="Victor T."/>
            <person name="Murray M."/>
        </authorList>
    </citation>
    <scope>NUCLEOTIDE SEQUENCE [LARGE SCALE GENOMIC DNA]</scope>
    <source>
        <strain>F11</strain>
    </source>
</reference>